<organism>
    <name type="scientific">Human immunodeficiency virus type 1 group M subtype B (isolate BH5)</name>
    <name type="common">HIV-1</name>
    <dbReference type="NCBI Taxonomy" id="11682"/>
    <lineage>
        <taxon>Viruses</taxon>
        <taxon>Riboviria</taxon>
        <taxon>Pararnavirae</taxon>
        <taxon>Artverviricota</taxon>
        <taxon>Revtraviricetes</taxon>
        <taxon>Ortervirales</taxon>
        <taxon>Retroviridae</taxon>
        <taxon>Orthoretrovirinae</taxon>
        <taxon>Lentivirus</taxon>
        <taxon>Human immunodeficiency virus type 1</taxon>
    </lineage>
</organism>
<comment type="function">
    <text evidence="2">Counteracts the innate antiviral activity of host APOBEC3F and APOBEC3G by promoting their ubiquitination and degradation. Acts as a substrate recognition component of an E3 ubiquitin-protein ligase complex: mechanistically, Vif hijacks a host cullin-5-RING E3 ubiquitin-protein ligase complex (ECS complex) and the transcription coactivator CBFB/CBF-beta to form an active E3 ubiquitin-protein ligase complex that targets APOBEC3G and APOBEC3F for polyubiquitination, leading to their degradation by the proteasome. Vif interaction with APOBEC3G also blocks its cytidine deaminase activity in a proteasome-independent manner, suggesting a dual inhibitory mechanism. May interact directly with APOBEC3G mRNA in order to inhibit its translation. Association with CBFB/CBF-beta also inhibits the transcription coactivator activity of CBFB/CBF-beta. Seems to play a role in viral morphology by affecting the stability of the viral nucleoprotein core. Finally, Vif also contributes to the G2 cell cycle arrest observed in HIV infected cells.</text>
</comment>
<comment type="subunit">
    <text evidence="1">Homomultimer; in vitro and presumably in vivo. Interacts with viral RNA and Pr55Gag precursor; these interactions mediate Vif incorporation into the virion. Interacts with the viral reverse transcriptase. Forms cullin-5-RING E3 ubiquitin-protein ligase complex (ECS complex) by interacting with host CUL5, RBX2, elongin BC complex (ELOB and ELOC) and CBFB/CBF-beta. Within the ECS complex, Vif interacts directly with host CUL5, ELOC and APOBEC (APOBEC3F and APOBEC3G) substrates. The ECS complex also contains some single-stranded RNA (ssRNA) that acts as a glue that bridges Vif with APOBEC (APOBEC3F and APOBEC3G) substrates. Interacts with host UBCE7IP1 isoform 3/ZIN and possibly with SAT. Interacts with host tyrosine kinases HCK and FYN; these interactions may decrease level of phosphorylated APOBEC3G incorporation into virions. Interacts with host ABCE1; this interaction may play a role in protecting viral RNA from damage during viral assembly. Interacts with host MDM2; this interaction targets Vif for degradation by the proteasome.</text>
</comment>
<comment type="subcellular location">
    <subcellularLocation>
        <location evidence="2">Host cytoplasm</location>
    </subcellularLocation>
    <subcellularLocation>
        <location evidence="2">Host cell membrane</location>
        <topology evidence="2">Peripheral membrane protein</topology>
        <orientation evidence="2">Cytoplasmic side</orientation>
    </subcellularLocation>
    <subcellularLocation>
        <location evidence="2">Virion</location>
    </subcellularLocation>
    <text evidence="2">In the cytoplasm, seems to colocalize with intermediate filament vimentin. A fraction is associated with the cytoplasmic side of cellular membranes, presumably via the interaction with Pr55Gag precursor. Incorporated in virions at a ratio of approximately 7 to 20 molecules per virion.</text>
</comment>
<comment type="induction">
    <text evidence="2">Expressed late during infection in a Rev-dependent manner.</text>
</comment>
<comment type="domain">
    <text evidence="2">The BC-like-box motif mediates the interaction with elongin BC complex.</text>
</comment>
<comment type="domain">
    <text evidence="2">The HCCH motif (H-x(5)-C-x(18)-C-x(5)-H) mediates the interaction with CUL5.</text>
</comment>
<comment type="PTM">
    <text evidence="2">Processed in virion by the viral protease.</text>
</comment>
<comment type="PTM">
    <text evidence="2">Highly phosphorylated on serine and threonine residues.</text>
</comment>
<comment type="PTM">
    <text evidence="2">Polyubiquitinated and degraded by the proteasome in the presence of APOBEC3G.</text>
</comment>
<comment type="miscellaneous">
    <text evidence="2">Vif-defective viruses show catastrophic failure in reverse transcription due to APOBEC-induced mutations that initiate a DNA base repair pathway and compromise the structural integrity of the ssDNA. In the absence of Vif, the virion is morphologically abnormal.</text>
</comment>
<comment type="miscellaneous">
    <text evidence="2">HIV-1 lineages are divided in three main groups, M (for Major), O (for Outlier), and N (for New, or Non-M, Non-O). The vast majority of strains found worldwide belong to the group M. Group O seems to be endemic to and largely confined to Cameroon and neighboring countries in West Central Africa, where these viruses represent a small minority of HIV-1 strains. The group N is represented by a limited number of isolates from Cameroonian persons. The group M is further subdivided in 9 clades or subtypes (A to D, F to H, J and K).</text>
</comment>
<comment type="miscellaneous">
    <text evidence="2">Required for replication in 'nonpermissive' cells, including primary T-cells, macrophages and certain T-cell lines, but is dispensable for replication in 'permissive' cell lines, such as 293T cells. In nonpermissive cells, Vif-defective viruses can produce virions, but they fail to complete reverse transcription and cannot successfully infect new cells.</text>
</comment>
<comment type="similarity">
    <text evidence="2">Belongs to the primate lentivirus group Vif protein family.</text>
</comment>
<feature type="chain" id="PRO_0000043026" description="Virion infectivity factor" evidence="2">
    <location>
        <begin position="1"/>
        <end position="192"/>
    </location>
</feature>
<feature type="chain" id="PRO_0000043027" description="p17" evidence="2">
    <location>
        <begin position="1"/>
        <end position="150"/>
    </location>
</feature>
<feature type="chain" id="PRO_0000043028" description="p7" evidence="2">
    <location>
        <begin position="151"/>
        <end position="192"/>
    </location>
</feature>
<feature type="region of interest" description="Interaction with host APOBEC3F; F1-box" evidence="2">
    <location>
        <begin position="14"/>
        <end position="17"/>
    </location>
</feature>
<feature type="region of interest" description="Interaction with host APOBEC3G; G-box" evidence="2">
    <location>
        <begin position="40"/>
        <end position="44"/>
    </location>
</feature>
<feature type="region of interest" description="Interaction with host APOBEC3F and APOBEC3G; FG-box" evidence="2">
    <location>
        <begin position="54"/>
        <end position="72"/>
    </location>
</feature>
<feature type="region of interest" description="Interaction with host APOBEC3F; F2-box" evidence="2">
    <location>
        <begin position="74"/>
        <end position="79"/>
    </location>
</feature>
<feature type="region of interest" description="RNA-binding" evidence="2">
    <location>
        <begin position="75"/>
        <end position="114"/>
    </location>
</feature>
<feature type="region of interest" description="SOCS box-like" evidence="2">
    <location>
        <begin position="151"/>
        <end position="180"/>
    </location>
</feature>
<feature type="region of interest" description="Multimerization" evidence="2">
    <location>
        <begin position="151"/>
        <end position="164"/>
    </location>
</feature>
<feature type="region of interest" description="Disordered" evidence="3">
    <location>
        <begin position="164"/>
        <end position="192"/>
    </location>
</feature>
<feature type="region of interest" description="Membrane association" evidence="2">
    <location>
        <begin position="171"/>
        <end position="172"/>
    </location>
</feature>
<feature type="short sequence motif" description="HCCH motif" evidence="2">
    <location>
        <begin position="108"/>
        <end position="139"/>
    </location>
</feature>
<feature type="short sequence motif" description="BC-box-like motif" evidence="2">
    <location>
        <begin position="144"/>
        <end position="153"/>
    </location>
</feature>
<feature type="compositionally biased region" description="Basic residues" evidence="3">
    <location>
        <begin position="176"/>
        <end position="186"/>
    </location>
</feature>
<feature type="binding site" evidence="2">
    <location>
        <position position="108"/>
    </location>
    <ligand>
        <name>Zn(2+)</name>
        <dbReference type="ChEBI" id="CHEBI:29105"/>
    </ligand>
</feature>
<feature type="binding site" evidence="2">
    <location>
        <position position="114"/>
    </location>
    <ligand>
        <name>Zn(2+)</name>
        <dbReference type="ChEBI" id="CHEBI:29105"/>
    </ligand>
</feature>
<feature type="binding site" evidence="2">
    <location>
        <position position="133"/>
    </location>
    <ligand>
        <name>Zn(2+)</name>
        <dbReference type="ChEBI" id="CHEBI:29105"/>
    </ligand>
</feature>
<feature type="binding site" evidence="2">
    <location>
        <position position="139"/>
    </location>
    <ligand>
        <name>Zn(2+)</name>
        <dbReference type="ChEBI" id="CHEBI:29105"/>
    </ligand>
</feature>
<feature type="site" description="Cleavage in virion (by viral protease)" evidence="2">
    <location>
        <begin position="150"/>
        <end position="151"/>
    </location>
</feature>
<feature type="modified residue" description="Phosphothreonine; by host MAP4K1" evidence="2">
    <location>
        <position position="96"/>
    </location>
</feature>
<feature type="modified residue" description="Phosphoserine; by host" evidence="2">
    <location>
        <position position="144"/>
    </location>
</feature>
<feature type="modified residue" description="Phosphothreonine; by host" evidence="2">
    <location>
        <position position="155"/>
    </location>
</feature>
<feature type="modified residue" description="Phosphoserine; by host MAP4K1" evidence="2">
    <location>
        <position position="165"/>
    </location>
</feature>
<feature type="modified residue" description="Phosphothreonine; by host" evidence="2">
    <location>
        <position position="188"/>
    </location>
</feature>
<protein>
    <recommendedName>
        <fullName evidence="2">Virion infectivity factor</fullName>
        <shortName evidence="2">Vif</shortName>
    </recommendedName>
    <alternativeName>
        <fullName evidence="2">SOR protein</fullName>
    </alternativeName>
    <component>
        <recommendedName>
            <fullName evidence="2">p17</fullName>
        </recommendedName>
    </component>
    <component>
        <recommendedName>
            <fullName evidence="2">p7</fullName>
        </recommendedName>
    </component>
</protein>
<dbReference type="EMBL" id="K02012">
    <property type="protein sequence ID" value="AAA44654.1"/>
    <property type="molecule type" value="Genomic_RNA"/>
</dbReference>
<dbReference type="SMR" id="P04598"/>
<dbReference type="GO" id="GO:0030430">
    <property type="term" value="C:host cell cytoplasm"/>
    <property type="evidence" value="ECO:0007669"/>
    <property type="project" value="UniProtKB-SubCell"/>
</dbReference>
<dbReference type="GO" id="GO:0020002">
    <property type="term" value="C:host cell plasma membrane"/>
    <property type="evidence" value="ECO:0007669"/>
    <property type="project" value="UniProtKB-SubCell"/>
</dbReference>
<dbReference type="GO" id="GO:0016020">
    <property type="term" value="C:membrane"/>
    <property type="evidence" value="ECO:0007669"/>
    <property type="project" value="UniProtKB-UniRule"/>
</dbReference>
<dbReference type="GO" id="GO:0044423">
    <property type="term" value="C:virion component"/>
    <property type="evidence" value="ECO:0007669"/>
    <property type="project" value="UniProtKB-UniRule"/>
</dbReference>
<dbReference type="GO" id="GO:0046872">
    <property type="term" value="F:metal ion binding"/>
    <property type="evidence" value="ECO:0007669"/>
    <property type="project" value="UniProtKB-KW"/>
</dbReference>
<dbReference type="GO" id="GO:0003723">
    <property type="term" value="F:RNA binding"/>
    <property type="evidence" value="ECO:0007669"/>
    <property type="project" value="UniProtKB-UniRule"/>
</dbReference>
<dbReference type="GO" id="GO:0019058">
    <property type="term" value="P:viral life cycle"/>
    <property type="evidence" value="ECO:0007669"/>
    <property type="project" value="InterPro"/>
</dbReference>
<dbReference type="HAMAP" id="MF_04081">
    <property type="entry name" value="HIV_VIF"/>
    <property type="match status" value="1"/>
</dbReference>
<dbReference type="InterPro" id="IPR000475">
    <property type="entry name" value="Vif"/>
</dbReference>
<dbReference type="Pfam" id="PF00559">
    <property type="entry name" value="Vif"/>
    <property type="match status" value="1"/>
</dbReference>
<dbReference type="PRINTS" id="PR00349">
    <property type="entry name" value="VIRIONINFFCT"/>
</dbReference>
<proteinExistence type="inferred from homology"/>
<gene>
    <name evidence="2" type="primary">vif</name>
</gene>
<organismHost>
    <name type="scientific">Homo sapiens</name>
    <name type="common">Human</name>
    <dbReference type="NCBI Taxonomy" id="9606"/>
</organismHost>
<evidence type="ECO:0000250" key="1">
    <source>
        <dbReference type="UniProtKB" id="O70897"/>
    </source>
</evidence>
<evidence type="ECO:0000255" key="2">
    <source>
        <dbReference type="HAMAP-Rule" id="MF_04081"/>
    </source>
</evidence>
<evidence type="ECO:0000256" key="3">
    <source>
        <dbReference type="SAM" id="MobiDB-lite"/>
    </source>
</evidence>
<reference key="1">
    <citation type="journal article" date="1985" name="Nature">
        <title>Complete nucleotide sequence of the AIDS virus, HTLV-III.</title>
        <authorList>
            <person name="Ratner L."/>
            <person name="Haseltine W.A."/>
            <person name="Patarca R."/>
            <person name="Livak K.J."/>
            <person name="Starcich B.R."/>
            <person name="Josephs S.F."/>
            <person name="Doran E.R."/>
            <person name="Rafalski J.A."/>
            <person name="Whitehorn E.A."/>
            <person name="Baumeister K."/>
            <person name="Ivanoff L."/>
            <person name="Petteway S.R. Jr."/>
            <person name="Pearson M.L."/>
            <person name="Lautenberger J.A."/>
            <person name="Papas T.S."/>
            <person name="Ghrayeb J."/>
            <person name="Chang N.T."/>
            <person name="Gallo R.C."/>
            <person name="Wong-Staal F."/>
        </authorList>
    </citation>
    <scope>NUCLEOTIDE SEQUENCE [GENOMIC RNA]</scope>
</reference>
<reference key="2">
    <citation type="journal article" date="2004" name="Trends Mol. Med.">
        <title>The viral infectivity factor (Vif) of HIV-1 unveiled.</title>
        <authorList>
            <person name="Rose K.M."/>
            <person name="Marin M."/>
            <person name="Kozak S.L."/>
            <person name="Kabat D."/>
        </authorList>
    </citation>
    <scope>REVIEW</scope>
</reference>
<name>VIF_HV1B5</name>
<keyword id="KW-0014">AIDS</keyword>
<keyword id="KW-1032">Host cell membrane</keyword>
<keyword id="KW-1035">Host cytoplasm</keyword>
<keyword id="KW-1043">Host membrane</keyword>
<keyword id="KW-0945">Host-virus interaction</keyword>
<keyword id="KW-0472">Membrane</keyword>
<keyword id="KW-0479">Metal-binding</keyword>
<keyword id="KW-0597">Phosphoprotein</keyword>
<keyword id="KW-0694">RNA-binding</keyword>
<keyword id="KW-0832">Ubl conjugation</keyword>
<keyword id="KW-0833">Ubl conjugation pathway</keyword>
<keyword id="KW-0946">Virion</keyword>
<keyword id="KW-0862">Zinc</keyword>
<sequence length="192" mass="22520">MENRWQVMIVWQVDRMRIRTWKSLVKHRMYVSGKARGWFYRHHYESPHPRISSEVHIPLGDARLVITTYWGLHTGERDWHLGQGVSIEWRKRRYSTQVDPELADQLIHLHYFDCFSDSAIRKALLGHIVSPRCEYQAGHNKVGSLQYLALAALITPKKVKPPLPSVTKLTEDRWNKPQKTKGHRGSHTMNGH</sequence>
<accession>P04598</accession>